<comment type="catalytic activity">
    <reaction evidence="1">
        <text>tRNA(Arg) + L-arginine + ATP = L-arginyl-tRNA(Arg) + AMP + diphosphate</text>
        <dbReference type="Rhea" id="RHEA:20301"/>
        <dbReference type="Rhea" id="RHEA-COMP:9658"/>
        <dbReference type="Rhea" id="RHEA-COMP:9673"/>
        <dbReference type="ChEBI" id="CHEBI:30616"/>
        <dbReference type="ChEBI" id="CHEBI:32682"/>
        <dbReference type="ChEBI" id="CHEBI:33019"/>
        <dbReference type="ChEBI" id="CHEBI:78442"/>
        <dbReference type="ChEBI" id="CHEBI:78513"/>
        <dbReference type="ChEBI" id="CHEBI:456215"/>
        <dbReference type="EC" id="6.1.1.19"/>
    </reaction>
</comment>
<comment type="subunit">
    <text evidence="1">Monomer.</text>
</comment>
<comment type="subcellular location">
    <subcellularLocation>
        <location evidence="1">Cytoplasm</location>
    </subcellularLocation>
</comment>
<comment type="similarity">
    <text evidence="1">Belongs to the class-I aminoacyl-tRNA synthetase family.</text>
</comment>
<evidence type="ECO:0000255" key="1">
    <source>
        <dbReference type="HAMAP-Rule" id="MF_00123"/>
    </source>
</evidence>
<feature type="chain" id="PRO_1000095399" description="Arginine--tRNA ligase">
    <location>
        <begin position="1"/>
        <end position="577"/>
    </location>
</feature>
<feature type="short sequence motif" description="'HIGH' region">
    <location>
        <begin position="122"/>
        <end position="132"/>
    </location>
</feature>
<organism>
    <name type="scientific">Salmonella dublin (strain CT_02021853)</name>
    <dbReference type="NCBI Taxonomy" id="439851"/>
    <lineage>
        <taxon>Bacteria</taxon>
        <taxon>Pseudomonadati</taxon>
        <taxon>Pseudomonadota</taxon>
        <taxon>Gammaproteobacteria</taxon>
        <taxon>Enterobacterales</taxon>
        <taxon>Enterobacteriaceae</taxon>
        <taxon>Salmonella</taxon>
    </lineage>
</organism>
<gene>
    <name evidence="1" type="primary">argS</name>
    <name type="ordered locus">SeD_A1337</name>
</gene>
<reference key="1">
    <citation type="journal article" date="2011" name="J. Bacteriol.">
        <title>Comparative genomics of 28 Salmonella enterica isolates: evidence for CRISPR-mediated adaptive sublineage evolution.</title>
        <authorList>
            <person name="Fricke W.F."/>
            <person name="Mammel M.K."/>
            <person name="McDermott P.F."/>
            <person name="Tartera C."/>
            <person name="White D.G."/>
            <person name="Leclerc J.E."/>
            <person name="Ravel J."/>
            <person name="Cebula T.A."/>
        </authorList>
    </citation>
    <scope>NUCLEOTIDE SEQUENCE [LARGE SCALE GENOMIC DNA]</scope>
    <source>
        <strain>CT_02021853</strain>
    </source>
</reference>
<sequence length="577" mass="64280">MNIQALLSEKVSQAMIAAGAPADCEPQVRQSAKVQFGDYQANGMMAVAKKLGMAPRQLAEQVLTHLDLSGIASKVEIAGPGFINIFLEPAFLAEQVQQALASERLGVSQPTRQTIVVDYSAPNVAKEMHVGHLRSTIIGDAAVRTLEFLGHHVIRANHVGDWGTQFGMLIAWLEKQQQENAGDMALADLEGFYRDAKKHYDEDEAFAERARNYVVKLQSGDTYFREMWRKLVDITMTQNQITYDRLNVTLTRDDVMGESLYNPMLPGIVADLKAKGLAVESEGATVVFLDEFKNKEGDPMGVIIQKKDGGYLYTTTDIACAKYRYETLHADRVLYYIDSRQHQHLMQAWTIVRKAGYVPDSVPLEHHMFGMMLGKDGKPFKTRAGGTVKLADLLDEALERARRLVAEKNPDMSADELEKLANAVGIGAVKYADLSKNRTTDYIFDWDNMLAFEGNTAPYMQYAYTRVLSVFRKADIDEQALASAPVIISEDREAQLAARLLQFEETLTVVAREGTPHVMCAYLYDVAGLFSGFYEHCPILSAENDAVRNSRLKLAQLTAKTLKLGLDTLGIETVERM</sequence>
<proteinExistence type="inferred from homology"/>
<dbReference type="EC" id="6.1.1.19" evidence="1"/>
<dbReference type="EMBL" id="CP001144">
    <property type="protein sequence ID" value="ACH78053.1"/>
    <property type="molecule type" value="Genomic_DNA"/>
</dbReference>
<dbReference type="RefSeq" id="WP_001025366.1">
    <property type="nucleotide sequence ID" value="NC_011205.1"/>
</dbReference>
<dbReference type="SMR" id="B5FSM1"/>
<dbReference type="KEGG" id="sed:SeD_A1337"/>
<dbReference type="HOGENOM" id="CLU_006406_5_1_6"/>
<dbReference type="Proteomes" id="UP000008322">
    <property type="component" value="Chromosome"/>
</dbReference>
<dbReference type="GO" id="GO:0005737">
    <property type="term" value="C:cytoplasm"/>
    <property type="evidence" value="ECO:0007669"/>
    <property type="project" value="UniProtKB-SubCell"/>
</dbReference>
<dbReference type="GO" id="GO:0004814">
    <property type="term" value="F:arginine-tRNA ligase activity"/>
    <property type="evidence" value="ECO:0007669"/>
    <property type="project" value="UniProtKB-UniRule"/>
</dbReference>
<dbReference type="GO" id="GO:0005524">
    <property type="term" value="F:ATP binding"/>
    <property type="evidence" value="ECO:0007669"/>
    <property type="project" value="UniProtKB-UniRule"/>
</dbReference>
<dbReference type="GO" id="GO:0006420">
    <property type="term" value="P:arginyl-tRNA aminoacylation"/>
    <property type="evidence" value="ECO:0007669"/>
    <property type="project" value="UniProtKB-UniRule"/>
</dbReference>
<dbReference type="CDD" id="cd07956">
    <property type="entry name" value="Anticodon_Ia_Arg"/>
    <property type="match status" value="1"/>
</dbReference>
<dbReference type="CDD" id="cd00671">
    <property type="entry name" value="ArgRS_core"/>
    <property type="match status" value="1"/>
</dbReference>
<dbReference type="FunFam" id="1.10.730.10:FF:000001">
    <property type="entry name" value="Arginine--tRNA ligase"/>
    <property type="match status" value="1"/>
</dbReference>
<dbReference type="FunFam" id="3.30.1360.70:FF:000001">
    <property type="entry name" value="Arginine--tRNA ligase"/>
    <property type="match status" value="1"/>
</dbReference>
<dbReference type="FunFam" id="3.40.50.620:FF:000030">
    <property type="entry name" value="Arginine--tRNA ligase"/>
    <property type="match status" value="1"/>
</dbReference>
<dbReference type="Gene3D" id="3.30.1360.70">
    <property type="entry name" value="Arginyl tRNA synthetase N-terminal domain"/>
    <property type="match status" value="1"/>
</dbReference>
<dbReference type="Gene3D" id="3.40.50.620">
    <property type="entry name" value="HUPs"/>
    <property type="match status" value="1"/>
</dbReference>
<dbReference type="Gene3D" id="1.10.730.10">
    <property type="entry name" value="Isoleucyl-tRNA Synthetase, Domain 1"/>
    <property type="match status" value="1"/>
</dbReference>
<dbReference type="HAMAP" id="MF_00123">
    <property type="entry name" value="Arg_tRNA_synth"/>
    <property type="match status" value="1"/>
</dbReference>
<dbReference type="InterPro" id="IPR001412">
    <property type="entry name" value="aa-tRNA-synth_I_CS"/>
</dbReference>
<dbReference type="InterPro" id="IPR001278">
    <property type="entry name" value="Arg-tRNA-ligase"/>
</dbReference>
<dbReference type="InterPro" id="IPR005148">
    <property type="entry name" value="Arg-tRNA-synth_N"/>
</dbReference>
<dbReference type="InterPro" id="IPR036695">
    <property type="entry name" value="Arg-tRNA-synth_N_sf"/>
</dbReference>
<dbReference type="InterPro" id="IPR035684">
    <property type="entry name" value="ArgRS_core"/>
</dbReference>
<dbReference type="InterPro" id="IPR008909">
    <property type="entry name" value="DALR_anticod-bd"/>
</dbReference>
<dbReference type="InterPro" id="IPR014729">
    <property type="entry name" value="Rossmann-like_a/b/a_fold"/>
</dbReference>
<dbReference type="InterPro" id="IPR009080">
    <property type="entry name" value="tRNAsynth_Ia_anticodon-bd"/>
</dbReference>
<dbReference type="NCBIfam" id="TIGR00456">
    <property type="entry name" value="argS"/>
    <property type="match status" value="1"/>
</dbReference>
<dbReference type="PANTHER" id="PTHR11956:SF5">
    <property type="entry name" value="ARGININE--TRNA LIGASE, CYTOPLASMIC"/>
    <property type="match status" value="1"/>
</dbReference>
<dbReference type="PANTHER" id="PTHR11956">
    <property type="entry name" value="ARGINYL-TRNA SYNTHETASE"/>
    <property type="match status" value="1"/>
</dbReference>
<dbReference type="Pfam" id="PF03485">
    <property type="entry name" value="Arg_tRNA_synt_N"/>
    <property type="match status" value="1"/>
</dbReference>
<dbReference type="Pfam" id="PF05746">
    <property type="entry name" value="DALR_1"/>
    <property type="match status" value="1"/>
</dbReference>
<dbReference type="Pfam" id="PF00750">
    <property type="entry name" value="tRNA-synt_1d"/>
    <property type="match status" value="1"/>
</dbReference>
<dbReference type="PRINTS" id="PR01038">
    <property type="entry name" value="TRNASYNTHARG"/>
</dbReference>
<dbReference type="SMART" id="SM01016">
    <property type="entry name" value="Arg_tRNA_synt_N"/>
    <property type="match status" value="1"/>
</dbReference>
<dbReference type="SMART" id="SM00836">
    <property type="entry name" value="DALR_1"/>
    <property type="match status" value="1"/>
</dbReference>
<dbReference type="SUPFAM" id="SSF47323">
    <property type="entry name" value="Anticodon-binding domain of a subclass of class I aminoacyl-tRNA synthetases"/>
    <property type="match status" value="1"/>
</dbReference>
<dbReference type="SUPFAM" id="SSF55190">
    <property type="entry name" value="Arginyl-tRNA synthetase (ArgRS), N-terminal 'additional' domain"/>
    <property type="match status" value="1"/>
</dbReference>
<dbReference type="SUPFAM" id="SSF52374">
    <property type="entry name" value="Nucleotidylyl transferase"/>
    <property type="match status" value="1"/>
</dbReference>
<dbReference type="PROSITE" id="PS00178">
    <property type="entry name" value="AA_TRNA_LIGASE_I"/>
    <property type="match status" value="1"/>
</dbReference>
<name>SYR_SALDC</name>
<accession>B5FSM1</accession>
<protein>
    <recommendedName>
        <fullName evidence="1">Arginine--tRNA ligase</fullName>
        <ecNumber evidence="1">6.1.1.19</ecNumber>
    </recommendedName>
    <alternativeName>
        <fullName evidence="1">Arginyl-tRNA synthetase</fullName>
        <shortName evidence="1">ArgRS</shortName>
    </alternativeName>
</protein>
<keyword id="KW-0030">Aminoacyl-tRNA synthetase</keyword>
<keyword id="KW-0067">ATP-binding</keyword>
<keyword id="KW-0963">Cytoplasm</keyword>
<keyword id="KW-0436">Ligase</keyword>
<keyword id="KW-0547">Nucleotide-binding</keyword>
<keyword id="KW-0648">Protein biosynthesis</keyword>